<comment type="function">
    <text>Catalyzes a two-step oxygenase reaction involved in the synthesis of chlorophyll b. Acts specifically on the non-esterified chlorophyllide a and not on chlorophyll a.</text>
</comment>
<comment type="catalytic activity">
    <reaction>
        <text>chlorophyllide a + 2 NADPH + 2 O2 + 2 H(+) = chlorophyllide b + 2 NADP(+) + 3 H2O</text>
        <dbReference type="Rhea" id="RHEA:30359"/>
        <dbReference type="ChEBI" id="CHEBI:15377"/>
        <dbReference type="ChEBI" id="CHEBI:15378"/>
        <dbReference type="ChEBI" id="CHEBI:15379"/>
        <dbReference type="ChEBI" id="CHEBI:57783"/>
        <dbReference type="ChEBI" id="CHEBI:58349"/>
        <dbReference type="ChEBI" id="CHEBI:83348"/>
        <dbReference type="ChEBI" id="CHEBI:83356"/>
        <dbReference type="EC" id="1.14.13.122"/>
    </reaction>
</comment>
<comment type="subcellular location">
    <subcellularLocation>
        <location>Plastid</location>
        <location>Chloroplast membrane</location>
        <topology>Peripheral membrane protein</topology>
    </subcellularLocation>
    <subcellularLocation>
        <location evidence="1">Plastid</location>
        <location evidence="1">Chloroplast thylakoid membrane</location>
        <topology evidence="1">Peripheral membrane protein</topology>
    </subcellularLocation>
</comment>
<comment type="alternative products">
    <event type="alternative splicing"/>
    <isoform>
        <id>Q8S7E1-1</id>
        <name>1</name>
        <sequence type="displayed"/>
    </isoform>
    <isoform>
        <id>Q8S7E1-2</id>
        <name>2</name>
        <sequence type="described" ref="VSP_020614"/>
    </isoform>
</comment>
<comment type="tissue specificity">
    <text evidence="5">Expressed in leaves and germinating seedlings, but not in sheaths and roots.</text>
</comment>
<comment type="induction">
    <text evidence="5">Down-regulated by treatment with H(2)O(2).</text>
</comment>
<comment type="domain">
    <text>Consists of three domains A, B and C. The C-terminal C domain possesses catalytic function while the N-terminal A domain confers protein instability in response to chlorophyll b accumulation.</text>
</comment>
<comment type="sequence caution" evidence="7">
    <conflict type="frameshift">
        <sequence resource="EMBL-CDS" id="AAG03051"/>
    </conflict>
</comment>
<comment type="sequence caution" evidence="7">
    <conflict type="erroneous gene model prediction">
        <sequence resource="EMBL-CDS" id="AAP55073"/>
    </conflict>
</comment>
<proteinExistence type="evidence at transcript level"/>
<protein>
    <recommendedName>
        <fullName>Chlorophyllide a oxygenase, chloroplastic</fullName>
        <shortName>Chlorophyll a oxygenase</shortName>
        <ecNumber>1.14.13.122</ecNumber>
    </recommendedName>
    <alternativeName>
        <fullName>Chlorophyll b synthase</fullName>
    </alternativeName>
</protein>
<feature type="transit peptide" description="Chloroplast" evidence="2">
    <location>
        <begin position="1"/>
        <end status="unknown"/>
    </location>
</feature>
<feature type="chain" id="PRO_0000250164" description="Chlorophyllide a oxygenase, chloroplastic">
    <location>
        <begin status="unknown"/>
        <end position="541"/>
    </location>
</feature>
<feature type="domain" description="Rieske" evidence="3">
    <location>
        <begin position="220"/>
        <end position="320"/>
    </location>
</feature>
<feature type="region of interest" description="Disordered" evidence="4">
    <location>
        <begin position="178"/>
        <end position="208"/>
    </location>
</feature>
<feature type="coiled-coil region" evidence="2">
    <location>
        <begin position="114"/>
        <end position="151"/>
    </location>
</feature>
<feature type="compositionally biased region" description="Polar residues" evidence="4">
    <location>
        <begin position="178"/>
        <end position="192"/>
    </location>
</feature>
<feature type="binding site" evidence="3">
    <location>
        <position position="261"/>
    </location>
    <ligand>
        <name>[2Fe-2S] cluster</name>
        <dbReference type="ChEBI" id="CHEBI:190135"/>
    </ligand>
</feature>
<feature type="binding site" evidence="3">
    <location>
        <position position="263"/>
    </location>
    <ligand>
        <name>[2Fe-2S] cluster</name>
        <dbReference type="ChEBI" id="CHEBI:190135"/>
    </ligand>
</feature>
<feature type="binding site" evidence="3">
    <location>
        <position position="280"/>
    </location>
    <ligand>
        <name>[2Fe-2S] cluster</name>
        <dbReference type="ChEBI" id="CHEBI:190135"/>
    </ligand>
</feature>
<feature type="binding site" evidence="3">
    <location>
        <position position="283"/>
    </location>
    <ligand>
        <name>[2Fe-2S] cluster</name>
        <dbReference type="ChEBI" id="CHEBI:190135"/>
    </ligand>
</feature>
<feature type="binding site" evidence="1">
    <location>
        <position position="359"/>
    </location>
    <ligand>
        <name>Fe cation</name>
        <dbReference type="ChEBI" id="CHEBI:24875"/>
    </ligand>
</feature>
<feature type="binding site" evidence="1">
    <location>
        <position position="363"/>
    </location>
    <ligand>
        <name>Fe cation</name>
        <dbReference type="ChEBI" id="CHEBI:24875"/>
    </ligand>
</feature>
<feature type="binding site" evidence="1">
    <location>
        <position position="366"/>
    </location>
    <ligand>
        <name>Fe cation</name>
        <dbReference type="ChEBI" id="CHEBI:24875"/>
    </ligand>
</feature>
<feature type="binding site" evidence="1">
    <location>
        <position position="371"/>
    </location>
    <ligand>
        <name>Fe cation</name>
        <dbReference type="ChEBI" id="CHEBI:24875"/>
    </ligand>
</feature>
<feature type="splice variant" id="VSP_020614" description="In isoform 2." evidence="6">
    <original>MTTVASLSLLPHLLIKPSFRCCSRK</original>
    <variation>MVTLLIETTQ</variation>
    <location>
        <begin position="1"/>
        <end position="25"/>
    </location>
</feature>
<feature type="sequence conflict" description="In Ref. 7; AK067730." evidence="7" ref="7">
    <original>E</original>
    <variation>K</variation>
    <location>
        <position position="179"/>
    </location>
</feature>
<feature type="sequence conflict" description="In Ref. 8; BAA82479." evidence="7" ref="8">
    <original>STSS</original>
    <variation>PTRP</variation>
    <location>
        <begin position="186"/>
        <end position="189"/>
    </location>
</feature>
<feature type="sequence conflict" description="In Ref. 7; AK067730." evidence="7" ref="7">
    <original>D</original>
    <variation>G</variation>
    <location>
        <position position="404"/>
    </location>
</feature>
<feature type="sequence conflict" description="In Ref. 1; AAG03051." evidence="7" ref="1">
    <original>L</original>
    <variation>V</variation>
    <location>
        <position position="489"/>
    </location>
</feature>
<sequence length="541" mass="60855">MTTVASLSLLPHLLIKPSFRCCSRKGVGRYGGIKVYAVLGDDGADYAKNNAWEALFHVDDPGPRVPIAKGKFLDVNQALEVVRFDIQYCDWRARQDLLTIMVLHNKVVEVLNPLAREFKSIGTLRKELAELQEELAKAHNQVHLSETRVSSALDKLAQMETLVNDRLLQDGGSSASTAECTSLAPSTSSASRVVNKKPPRRSLNVSGPVQPYNPSLKNFWYPVAFSSDLKDDTMVPIDCFEEQWVIFRGKDGRPGCVMNTCAHRACPLHLGSVNEGRIQCPYHGWEYSTDGKCEKMPSTKMLNVRIRSLPCFEQEGMVWIWPGNDPPKSTIPSLLPPSGFTIHAEIVMELPVEHGLLLDNLLDLAHAPFTHTSTFAKGWSVPSLVKFLTPSSGLQGYWDPYPIDMEFRPPCMVLSTIGISKPGKLEGKSTKQCSTHLHQLHICLPSSRNKTRLLYRMSLDFAPWIKHVPFMHILWSHFAEKVLNEDLRLVLGQQERMINGANVWNWPVSYDKLGIRYRLWRDAIERGVDRLPFSNQSESGS</sequence>
<evidence type="ECO:0000250" key="1"/>
<evidence type="ECO:0000255" key="2"/>
<evidence type="ECO:0000255" key="3">
    <source>
        <dbReference type="PROSITE-ProRule" id="PRU00628"/>
    </source>
</evidence>
<evidence type="ECO:0000256" key="4">
    <source>
        <dbReference type="SAM" id="MobiDB-lite"/>
    </source>
</evidence>
<evidence type="ECO:0000269" key="5">
    <source ref="1"/>
</evidence>
<evidence type="ECO:0000303" key="6">
    <source>
    </source>
</evidence>
<evidence type="ECO:0000305" key="7"/>
<evidence type="ECO:0000312" key="8">
    <source>
        <dbReference type="EMBL" id="EEE51429.1"/>
    </source>
</evidence>
<name>CAO_ORYSJ</name>
<keyword id="KW-0001">2Fe-2S</keyword>
<keyword id="KW-0025">Alternative splicing</keyword>
<keyword id="KW-0149">Chlorophyll biosynthesis</keyword>
<keyword id="KW-0150">Chloroplast</keyword>
<keyword id="KW-0175">Coiled coil</keyword>
<keyword id="KW-0408">Iron</keyword>
<keyword id="KW-0411">Iron-sulfur</keyword>
<keyword id="KW-0472">Membrane</keyword>
<keyword id="KW-0479">Metal-binding</keyword>
<keyword id="KW-0521">NADP</keyword>
<keyword id="KW-0560">Oxidoreductase</keyword>
<keyword id="KW-0934">Plastid</keyword>
<keyword id="KW-1185">Reference proteome</keyword>
<keyword id="KW-0793">Thylakoid</keyword>
<keyword id="KW-0809">Transit peptide</keyword>
<reference key="1">
    <citation type="journal article" date="2000" name="Plant Pathol. J.">
        <title>Cloning and expression of a rice cDNA encoding a Lls1 homolog of maize.</title>
        <authorList>
            <person name="Jwa N.-S."/>
            <person name="Park S.-G."/>
            <person name="Park C.-H."/>
            <person name="Kim S.-O."/>
            <person name="Ahn I.-P."/>
            <person name="Park S.-Y."/>
            <person name="Yoon C.-H."/>
            <person name="Lee Y.-H."/>
        </authorList>
    </citation>
    <scope>NUCLEOTIDE SEQUENCE [MRNA] (ISOFORM 1)</scope>
    <scope>TISSUE SPECIFICITY</scope>
    <scope>INDUCTION</scope>
    <source>
        <strain>cv. Hwacheong</strain>
        <strain>cv. Ilpoom</strain>
    </source>
</reference>
<reference key="2">
    <citation type="journal article" date="2003" name="Science">
        <title>In-depth view of structure, activity, and evolution of rice chromosome 10.</title>
        <authorList>
            <person name="Yu Y."/>
            <person name="Rambo T."/>
            <person name="Currie J."/>
            <person name="Saski C."/>
            <person name="Kim H.-R."/>
            <person name="Collura K."/>
            <person name="Thompson S."/>
            <person name="Simmons J."/>
            <person name="Yang T.-J."/>
            <person name="Nah G."/>
            <person name="Patel A.J."/>
            <person name="Thurmond S."/>
            <person name="Henry D."/>
            <person name="Oates R."/>
            <person name="Palmer M."/>
            <person name="Pries G."/>
            <person name="Gibson J."/>
            <person name="Anderson H."/>
            <person name="Paradkar M."/>
            <person name="Crane L."/>
            <person name="Dale J."/>
            <person name="Carver M.B."/>
            <person name="Wood T."/>
            <person name="Frisch D."/>
            <person name="Engler F."/>
            <person name="Soderlund C."/>
            <person name="Palmer L.E."/>
            <person name="Teytelman L."/>
            <person name="Nascimento L."/>
            <person name="De la Bastide M."/>
            <person name="Spiegel L."/>
            <person name="Ware D."/>
            <person name="O'Shaughnessy A."/>
            <person name="Dike S."/>
            <person name="Dedhia N."/>
            <person name="Preston R."/>
            <person name="Huang E."/>
            <person name="Ferraro K."/>
            <person name="Kuit K."/>
            <person name="Miller B."/>
            <person name="Zutavern T."/>
            <person name="Katzenberger F."/>
            <person name="Muller S."/>
            <person name="Balija V."/>
            <person name="Martienssen R.A."/>
            <person name="Stein L."/>
            <person name="Minx P."/>
            <person name="Johnson D."/>
            <person name="Cordum H."/>
            <person name="Mardis E."/>
            <person name="Cheng Z."/>
            <person name="Jiang J."/>
            <person name="Wilson R."/>
            <person name="McCombie W.R."/>
            <person name="Wing R.A."/>
            <person name="Yuan Q."/>
            <person name="Ouyang S."/>
            <person name="Liu J."/>
            <person name="Jones K.M."/>
            <person name="Gansberger K."/>
            <person name="Moffat K."/>
            <person name="Hill J."/>
            <person name="Tsitrin T."/>
            <person name="Overton L."/>
            <person name="Bera J."/>
            <person name="Kim M."/>
            <person name="Jin S."/>
            <person name="Tallon L."/>
            <person name="Ciecko A."/>
            <person name="Pai G."/>
            <person name="Van Aken S."/>
            <person name="Utterback T."/>
            <person name="Reidmuller S."/>
            <person name="Bormann J."/>
            <person name="Feldblyum T."/>
            <person name="Hsiao J."/>
            <person name="Zismann V."/>
            <person name="Blunt S."/>
            <person name="de Vazeille A.R."/>
            <person name="Shaffer T."/>
            <person name="Koo H."/>
            <person name="Suh B."/>
            <person name="Yang Q."/>
            <person name="Haas B."/>
            <person name="Peterson J."/>
            <person name="Pertea M."/>
            <person name="Volfovsky N."/>
            <person name="Wortman J."/>
            <person name="White O."/>
            <person name="Salzberg S.L."/>
            <person name="Fraser C.M."/>
            <person name="Buell C.R."/>
            <person name="Messing J."/>
            <person name="Song R."/>
            <person name="Fuks G."/>
            <person name="Llaca V."/>
            <person name="Kovchak S."/>
            <person name="Young S."/>
            <person name="Bowers J.E."/>
            <person name="Paterson A.H."/>
            <person name="Johns M.A."/>
            <person name="Mao L."/>
            <person name="Pan H."/>
            <person name="Dean R.A."/>
        </authorList>
    </citation>
    <scope>NUCLEOTIDE SEQUENCE [LARGE SCALE GENOMIC DNA]</scope>
    <source>
        <strain>cv. Nipponbare</strain>
    </source>
</reference>
<reference key="3">
    <citation type="journal article" date="2005" name="Nature">
        <title>The map-based sequence of the rice genome.</title>
        <authorList>
            <consortium name="International rice genome sequencing project (IRGSP)"/>
        </authorList>
    </citation>
    <scope>NUCLEOTIDE SEQUENCE [LARGE SCALE GENOMIC DNA]</scope>
    <source>
        <strain>cv. Nipponbare</strain>
    </source>
</reference>
<reference key="4">
    <citation type="journal article" date="2008" name="Nucleic Acids Res.">
        <title>The rice annotation project database (RAP-DB): 2008 update.</title>
        <authorList>
            <consortium name="The rice annotation project (RAP)"/>
        </authorList>
    </citation>
    <scope>GENOME REANNOTATION</scope>
    <source>
        <strain>cv. Nipponbare</strain>
    </source>
</reference>
<reference key="5">
    <citation type="journal article" date="2013" name="Rice">
        <title>Improvement of the Oryza sativa Nipponbare reference genome using next generation sequence and optical map data.</title>
        <authorList>
            <person name="Kawahara Y."/>
            <person name="de la Bastide M."/>
            <person name="Hamilton J.P."/>
            <person name="Kanamori H."/>
            <person name="McCombie W.R."/>
            <person name="Ouyang S."/>
            <person name="Schwartz D.C."/>
            <person name="Tanaka T."/>
            <person name="Wu J."/>
            <person name="Zhou S."/>
            <person name="Childs K.L."/>
            <person name="Davidson R.M."/>
            <person name="Lin H."/>
            <person name="Quesada-Ocampo L."/>
            <person name="Vaillancourt B."/>
            <person name="Sakai H."/>
            <person name="Lee S.S."/>
            <person name="Kim J."/>
            <person name="Numa H."/>
            <person name="Itoh T."/>
            <person name="Buell C.R."/>
            <person name="Matsumoto T."/>
        </authorList>
    </citation>
    <scope>GENOME REANNOTATION</scope>
    <source>
        <strain>cv. Nipponbare</strain>
    </source>
</reference>
<reference key="6">
    <citation type="journal article" date="2005" name="PLoS Biol.">
        <title>The genomes of Oryza sativa: a history of duplications.</title>
        <authorList>
            <person name="Yu J."/>
            <person name="Wang J."/>
            <person name="Lin W."/>
            <person name="Li S."/>
            <person name="Li H."/>
            <person name="Zhou J."/>
            <person name="Ni P."/>
            <person name="Dong W."/>
            <person name="Hu S."/>
            <person name="Zeng C."/>
            <person name="Zhang J."/>
            <person name="Zhang Y."/>
            <person name="Li R."/>
            <person name="Xu Z."/>
            <person name="Li S."/>
            <person name="Li X."/>
            <person name="Zheng H."/>
            <person name="Cong L."/>
            <person name="Lin L."/>
            <person name="Yin J."/>
            <person name="Geng J."/>
            <person name="Li G."/>
            <person name="Shi J."/>
            <person name="Liu J."/>
            <person name="Lv H."/>
            <person name="Li J."/>
            <person name="Wang J."/>
            <person name="Deng Y."/>
            <person name="Ran L."/>
            <person name="Shi X."/>
            <person name="Wang X."/>
            <person name="Wu Q."/>
            <person name="Li C."/>
            <person name="Ren X."/>
            <person name="Wang J."/>
            <person name="Wang X."/>
            <person name="Li D."/>
            <person name="Liu D."/>
            <person name="Zhang X."/>
            <person name="Ji Z."/>
            <person name="Zhao W."/>
            <person name="Sun Y."/>
            <person name="Zhang Z."/>
            <person name="Bao J."/>
            <person name="Han Y."/>
            <person name="Dong L."/>
            <person name="Ji J."/>
            <person name="Chen P."/>
            <person name="Wu S."/>
            <person name="Liu J."/>
            <person name="Xiao Y."/>
            <person name="Bu D."/>
            <person name="Tan J."/>
            <person name="Yang L."/>
            <person name="Ye C."/>
            <person name="Zhang J."/>
            <person name="Xu J."/>
            <person name="Zhou Y."/>
            <person name="Yu Y."/>
            <person name="Zhang B."/>
            <person name="Zhuang S."/>
            <person name="Wei H."/>
            <person name="Liu B."/>
            <person name="Lei M."/>
            <person name="Yu H."/>
            <person name="Li Y."/>
            <person name="Xu H."/>
            <person name="Wei S."/>
            <person name="He X."/>
            <person name="Fang L."/>
            <person name="Zhang Z."/>
            <person name="Zhang Y."/>
            <person name="Huang X."/>
            <person name="Su Z."/>
            <person name="Tong W."/>
            <person name="Li J."/>
            <person name="Tong Z."/>
            <person name="Li S."/>
            <person name="Ye J."/>
            <person name="Wang L."/>
            <person name="Fang L."/>
            <person name="Lei T."/>
            <person name="Chen C.-S."/>
            <person name="Chen H.-C."/>
            <person name="Xu Z."/>
            <person name="Li H."/>
            <person name="Huang H."/>
            <person name="Zhang F."/>
            <person name="Xu H."/>
            <person name="Li N."/>
            <person name="Zhao C."/>
            <person name="Li S."/>
            <person name="Dong L."/>
            <person name="Huang Y."/>
            <person name="Li L."/>
            <person name="Xi Y."/>
            <person name="Qi Q."/>
            <person name="Li W."/>
            <person name="Zhang B."/>
            <person name="Hu W."/>
            <person name="Zhang Y."/>
            <person name="Tian X."/>
            <person name="Jiao Y."/>
            <person name="Liang X."/>
            <person name="Jin J."/>
            <person name="Gao L."/>
            <person name="Zheng W."/>
            <person name="Hao B."/>
            <person name="Liu S.-M."/>
            <person name="Wang W."/>
            <person name="Yuan L."/>
            <person name="Cao M."/>
            <person name="McDermott J."/>
            <person name="Samudrala R."/>
            <person name="Wang J."/>
            <person name="Wong G.K.-S."/>
            <person name="Yang H."/>
        </authorList>
    </citation>
    <scope>NUCLEOTIDE SEQUENCE [LARGE SCALE GENOMIC DNA]</scope>
    <source>
        <strain>cv. Nipponbare</strain>
    </source>
</reference>
<reference key="7">
    <citation type="journal article" date="2003" name="Science">
        <title>Collection, mapping, and annotation of over 28,000 cDNA clones from japonica rice.</title>
        <authorList>
            <consortium name="The rice full-length cDNA consortium"/>
        </authorList>
    </citation>
    <scope>NUCLEOTIDE SEQUENCE [LARGE SCALE MRNA] (ISOFORMS 1 AND 2)</scope>
    <source>
        <strain>cv. Nipponbare</strain>
    </source>
</reference>
<reference key="8">
    <citation type="journal article" date="1999" name="Nature">
        <title>Chlorophyll b and phycobilins in the common ancestor of cyanobacteria and chloroplasts.</title>
        <authorList>
            <person name="Tomitani A."/>
            <person name="Okada K."/>
            <person name="Miyashita H."/>
            <person name="Matthijs H.C.P."/>
            <person name="Ohno T."/>
            <person name="Tanaka A."/>
        </authorList>
    </citation>
    <scope>NUCLEOTIDE SEQUENCE [MRNA] OF 186-541 (ISOFORM 1)</scope>
</reference>
<organism>
    <name type="scientific">Oryza sativa subsp. japonica</name>
    <name type="common">Rice</name>
    <dbReference type="NCBI Taxonomy" id="39947"/>
    <lineage>
        <taxon>Eukaryota</taxon>
        <taxon>Viridiplantae</taxon>
        <taxon>Streptophyta</taxon>
        <taxon>Embryophyta</taxon>
        <taxon>Tracheophyta</taxon>
        <taxon>Spermatophyta</taxon>
        <taxon>Magnoliopsida</taxon>
        <taxon>Liliopsida</taxon>
        <taxon>Poales</taxon>
        <taxon>Poaceae</taxon>
        <taxon>BOP clade</taxon>
        <taxon>Oryzoideae</taxon>
        <taxon>Oryzeae</taxon>
        <taxon>Oryzinae</taxon>
        <taxon>Oryza</taxon>
        <taxon>Oryza sativa</taxon>
    </lineage>
</organism>
<dbReference type="EC" id="1.14.13.122"/>
<dbReference type="EMBL" id="AF284781">
    <property type="protein sequence ID" value="AAG03051.1"/>
    <property type="status" value="ALT_FRAME"/>
    <property type="molecule type" value="mRNA"/>
</dbReference>
<dbReference type="EMBL" id="AC087599">
    <property type="protein sequence ID" value="AAL79703.1"/>
    <property type="molecule type" value="Genomic_DNA"/>
</dbReference>
<dbReference type="EMBL" id="DP000086">
    <property type="protein sequence ID" value="AAP55073.2"/>
    <property type="status" value="ALT_SEQ"/>
    <property type="molecule type" value="Genomic_DNA"/>
</dbReference>
<dbReference type="EMBL" id="DP000086">
    <property type="protein sequence ID" value="ABB48002.2"/>
    <property type="molecule type" value="Genomic_DNA"/>
</dbReference>
<dbReference type="EMBL" id="DP000086">
    <property type="protein sequence ID" value="ABB48003.2"/>
    <property type="molecule type" value="Genomic_DNA"/>
</dbReference>
<dbReference type="EMBL" id="AP008216">
    <property type="protein sequence ID" value="BAF27270.1"/>
    <property type="molecule type" value="Genomic_DNA"/>
</dbReference>
<dbReference type="EMBL" id="AP014966">
    <property type="protein sequence ID" value="BAT12123.1"/>
    <property type="molecule type" value="Genomic_DNA"/>
</dbReference>
<dbReference type="EMBL" id="AP014966">
    <property type="protein sequence ID" value="BAT12124.1"/>
    <property type="molecule type" value="Genomic_DNA"/>
</dbReference>
<dbReference type="EMBL" id="CM000147">
    <property type="protein sequence ID" value="EEE51429.1"/>
    <property type="molecule type" value="Genomic_DNA"/>
</dbReference>
<dbReference type="EMBL" id="AK065124">
    <property type="protein sequence ID" value="BAG89371.1"/>
    <property type="molecule type" value="mRNA"/>
</dbReference>
<dbReference type="EMBL" id="AK067730">
    <property type="status" value="NOT_ANNOTATED_CDS"/>
    <property type="molecule type" value="mRNA"/>
</dbReference>
<dbReference type="EMBL" id="AB021310">
    <property type="protein sequence ID" value="BAA82479.1"/>
    <property type="molecule type" value="mRNA"/>
</dbReference>
<dbReference type="RefSeq" id="XP_015614086.1">
    <property type="nucleotide sequence ID" value="XM_015758600.1"/>
</dbReference>
<dbReference type="SMR" id="Q8S7E1"/>
<dbReference type="FunCoup" id="Q8S7E1">
    <property type="interactions" value="635"/>
</dbReference>
<dbReference type="STRING" id="39947.Q8S7E1"/>
<dbReference type="PaxDb" id="39947-Q8S7E1"/>
<dbReference type="EnsemblPlants" id="Os10t0567400-01">
    <molecule id="Q8S7E1-1"/>
    <property type="protein sequence ID" value="Os10t0567400-01"/>
    <property type="gene ID" value="Os10g0567400"/>
</dbReference>
<dbReference type="Gramene" id="Os10t0567400-01">
    <molecule id="Q8S7E1-1"/>
    <property type="protein sequence ID" value="Os10t0567400-01"/>
    <property type="gene ID" value="Os10g0567400"/>
</dbReference>
<dbReference type="KEGG" id="dosa:Os10g0567400"/>
<dbReference type="eggNOG" id="ENOG502QS20">
    <property type="taxonomic scope" value="Eukaryota"/>
</dbReference>
<dbReference type="InParanoid" id="Q8S7E1"/>
<dbReference type="OMA" id="SGLEGYW"/>
<dbReference type="OrthoDB" id="426882at2759"/>
<dbReference type="BRENDA" id="1.14.13.122">
    <property type="organism ID" value="8948"/>
</dbReference>
<dbReference type="Proteomes" id="UP000000763">
    <property type="component" value="Chromosome 10"/>
</dbReference>
<dbReference type="Proteomes" id="UP000007752">
    <property type="component" value="Chromosome 10"/>
</dbReference>
<dbReference type="Proteomes" id="UP000059680">
    <property type="component" value="Chromosome 10"/>
</dbReference>
<dbReference type="ExpressionAtlas" id="Q8S7E1">
    <property type="expression patterns" value="baseline and differential"/>
</dbReference>
<dbReference type="GO" id="GO:0031969">
    <property type="term" value="C:chloroplast membrane"/>
    <property type="evidence" value="ECO:0007669"/>
    <property type="project" value="UniProtKB-SubCell"/>
</dbReference>
<dbReference type="GO" id="GO:0009535">
    <property type="term" value="C:chloroplast thylakoid membrane"/>
    <property type="evidence" value="ECO:0007669"/>
    <property type="project" value="UniProtKB-SubCell"/>
</dbReference>
<dbReference type="GO" id="GO:0005737">
    <property type="term" value="C:cytoplasm"/>
    <property type="evidence" value="ECO:0000318"/>
    <property type="project" value="GO_Central"/>
</dbReference>
<dbReference type="GO" id="GO:0051537">
    <property type="term" value="F:2 iron, 2 sulfur cluster binding"/>
    <property type="evidence" value="ECO:0007669"/>
    <property type="project" value="UniProtKB-KW"/>
</dbReference>
<dbReference type="GO" id="GO:0010277">
    <property type="term" value="F:chlorophyllide a oxygenase activity"/>
    <property type="evidence" value="ECO:0007669"/>
    <property type="project" value="UniProtKB-EC"/>
</dbReference>
<dbReference type="GO" id="GO:0005506">
    <property type="term" value="F:iron ion binding"/>
    <property type="evidence" value="ECO:0007669"/>
    <property type="project" value="InterPro"/>
</dbReference>
<dbReference type="GO" id="GO:0016491">
    <property type="term" value="F:oxidoreductase activity"/>
    <property type="evidence" value="ECO:0000318"/>
    <property type="project" value="GO_Central"/>
</dbReference>
<dbReference type="GO" id="GO:0015995">
    <property type="term" value="P:chlorophyll biosynthetic process"/>
    <property type="evidence" value="ECO:0007669"/>
    <property type="project" value="UniProtKB-KW"/>
</dbReference>
<dbReference type="CDD" id="cd04337">
    <property type="entry name" value="Rieske_RO_Alpha_Cao"/>
    <property type="match status" value="1"/>
</dbReference>
<dbReference type="Gene3D" id="3.90.380.10">
    <property type="entry name" value="Naphthalene 1,2-dioxygenase Alpha Subunit, Chain A, domain 1"/>
    <property type="match status" value="1"/>
</dbReference>
<dbReference type="Gene3D" id="2.102.10.10">
    <property type="entry name" value="Rieske [2Fe-2S] iron-sulphur domain"/>
    <property type="match status" value="1"/>
</dbReference>
<dbReference type="InterPro" id="IPR050584">
    <property type="entry name" value="Cholesterol_7-desaturase"/>
</dbReference>
<dbReference type="InterPro" id="IPR013626">
    <property type="entry name" value="PaO"/>
</dbReference>
<dbReference type="InterPro" id="IPR017941">
    <property type="entry name" value="Rieske_2Fe-2S"/>
</dbReference>
<dbReference type="InterPro" id="IPR036922">
    <property type="entry name" value="Rieske_2Fe-2S_sf"/>
</dbReference>
<dbReference type="InterPro" id="IPR015881">
    <property type="entry name" value="Ring-hydroxy_dOase_2Fe2S_BS"/>
</dbReference>
<dbReference type="PANTHER" id="PTHR21266:SF19">
    <property type="entry name" value="CHLOROPHYLLIDE A OXYGENASE, CHLOROPLASTIC"/>
    <property type="match status" value="1"/>
</dbReference>
<dbReference type="PANTHER" id="PTHR21266">
    <property type="entry name" value="IRON-SULFUR DOMAIN CONTAINING PROTEIN"/>
    <property type="match status" value="1"/>
</dbReference>
<dbReference type="Pfam" id="PF08417">
    <property type="entry name" value="PaO"/>
    <property type="match status" value="1"/>
</dbReference>
<dbReference type="Pfam" id="PF00355">
    <property type="entry name" value="Rieske"/>
    <property type="match status" value="1"/>
</dbReference>
<dbReference type="SUPFAM" id="SSF55961">
    <property type="entry name" value="Bet v1-like"/>
    <property type="match status" value="1"/>
</dbReference>
<dbReference type="SUPFAM" id="SSF50022">
    <property type="entry name" value="ISP domain"/>
    <property type="match status" value="1"/>
</dbReference>
<dbReference type="PROSITE" id="PS51296">
    <property type="entry name" value="RIESKE"/>
    <property type="match status" value="1"/>
</dbReference>
<gene>
    <name type="primary">CAO</name>
    <name type="synonym">LLS1</name>
    <name type="ordered locus">Os10g0567400</name>
    <name type="ordered locus">LOC_Os10g41780</name>
    <name evidence="8" type="ORF">OsJ_32509</name>
    <name type="ORF">OSJNBa0057L21.2</name>
</gene>
<accession>Q8S7E1</accession>
<accession>Q0IVJ5</accession>
<accession>Q336Q7</accession>
<accession>Q336Q8</accession>
<accession>Q7XC03</accession>
<accession>Q9FYV0</accession>
<accession>Q9XJ40</accession>